<name>RL36_BURP0</name>
<evidence type="ECO:0000255" key="1">
    <source>
        <dbReference type="HAMAP-Rule" id="MF_00251"/>
    </source>
</evidence>
<evidence type="ECO:0000305" key="2"/>
<keyword id="KW-0687">Ribonucleoprotein</keyword>
<keyword id="KW-0689">Ribosomal protein</keyword>
<feature type="chain" id="PRO_0000302172" description="Large ribosomal subunit protein bL36">
    <location>
        <begin position="1"/>
        <end position="38"/>
    </location>
</feature>
<comment type="similarity">
    <text evidence="1">Belongs to the bacterial ribosomal protein bL36 family.</text>
</comment>
<organism>
    <name type="scientific">Burkholderia pseudomallei (strain 1106a)</name>
    <dbReference type="NCBI Taxonomy" id="357348"/>
    <lineage>
        <taxon>Bacteria</taxon>
        <taxon>Pseudomonadati</taxon>
        <taxon>Pseudomonadota</taxon>
        <taxon>Betaproteobacteria</taxon>
        <taxon>Burkholderiales</taxon>
        <taxon>Burkholderiaceae</taxon>
        <taxon>Burkholderia</taxon>
        <taxon>pseudomallei group</taxon>
    </lineage>
</organism>
<accession>A3P091</accession>
<gene>
    <name evidence="1" type="primary">rpmJ</name>
    <name type="ordered locus">BURPS1106A_3782</name>
</gene>
<dbReference type="EMBL" id="CP000572">
    <property type="protein sequence ID" value="ABN90454.1"/>
    <property type="molecule type" value="Genomic_DNA"/>
</dbReference>
<dbReference type="RefSeq" id="WP_004199844.1">
    <property type="nucleotide sequence ID" value="NC_009076.1"/>
</dbReference>
<dbReference type="SMR" id="A3P091"/>
<dbReference type="GeneID" id="98107138"/>
<dbReference type="KEGG" id="bpl:BURPS1106A_3782"/>
<dbReference type="HOGENOM" id="CLU_135723_6_2_4"/>
<dbReference type="Proteomes" id="UP000006738">
    <property type="component" value="Chromosome I"/>
</dbReference>
<dbReference type="GO" id="GO:0005737">
    <property type="term" value="C:cytoplasm"/>
    <property type="evidence" value="ECO:0007669"/>
    <property type="project" value="UniProtKB-ARBA"/>
</dbReference>
<dbReference type="GO" id="GO:1990904">
    <property type="term" value="C:ribonucleoprotein complex"/>
    <property type="evidence" value="ECO:0007669"/>
    <property type="project" value="UniProtKB-KW"/>
</dbReference>
<dbReference type="GO" id="GO:0005840">
    <property type="term" value="C:ribosome"/>
    <property type="evidence" value="ECO:0007669"/>
    <property type="project" value="UniProtKB-KW"/>
</dbReference>
<dbReference type="GO" id="GO:0003735">
    <property type="term" value="F:structural constituent of ribosome"/>
    <property type="evidence" value="ECO:0007669"/>
    <property type="project" value="InterPro"/>
</dbReference>
<dbReference type="GO" id="GO:0006412">
    <property type="term" value="P:translation"/>
    <property type="evidence" value="ECO:0007669"/>
    <property type="project" value="UniProtKB-UniRule"/>
</dbReference>
<dbReference type="HAMAP" id="MF_00251">
    <property type="entry name" value="Ribosomal_bL36"/>
    <property type="match status" value="1"/>
</dbReference>
<dbReference type="InterPro" id="IPR000473">
    <property type="entry name" value="Ribosomal_bL36"/>
</dbReference>
<dbReference type="InterPro" id="IPR035977">
    <property type="entry name" value="Ribosomal_bL36_sp"/>
</dbReference>
<dbReference type="NCBIfam" id="TIGR01022">
    <property type="entry name" value="rpmJ_bact"/>
    <property type="match status" value="1"/>
</dbReference>
<dbReference type="PANTHER" id="PTHR42888">
    <property type="entry name" value="50S RIBOSOMAL PROTEIN L36, CHLOROPLASTIC"/>
    <property type="match status" value="1"/>
</dbReference>
<dbReference type="PANTHER" id="PTHR42888:SF1">
    <property type="entry name" value="LARGE RIBOSOMAL SUBUNIT PROTEIN BL36C"/>
    <property type="match status" value="1"/>
</dbReference>
<dbReference type="Pfam" id="PF00444">
    <property type="entry name" value="Ribosomal_L36"/>
    <property type="match status" value="1"/>
</dbReference>
<dbReference type="SUPFAM" id="SSF57840">
    <property type="entry name" value="Ribosomal protein L36"/>
    <property type="match status" value="1"/>
</dbReference>
<dbReference type="PROSITE" id="PS00828">
    <property type="entry name" value="RIBOSOMAL_L36"/>
    <property type="match status" value="1"/>
</dbReference>
<reference key="1">
    <citation type="journal article" date="2010" name="Genome Biol. Evol.">
        <title>Continuing evolution of Burkholderia mallei through genome reduction and large-scale rearrangements.</title>
        <authorList>
            <person name="Losada L."/>
            <person name="Ronning C.M."/>
            <person name="DeShazer D."/>
            <person name="Woods D."/>
            <person name="Fedorova N."/>
            <person name="Kim H.S."/>
            <person name="Shabalina S.A."/>
            <person name="Pearson T.R."/>
            <person name="Brinkac L."/>
            <person name="Tan P."/>
            <person name="Nandi T."/>
            <person name="Crabtree J."/>
            <person name="Badger J."/>
            <person name="Beckstrom-Sternberg S."/>
            <person name="Saqib M."/>
            <person name="Schutzer S.E."/>
            <person name="Keim P."/>
            <person name="Nierman W.C."/>
        </authorList>
    </citation>
    <scope>NUCLEOTIDE SEQUENCE [LARGE SCALE GENOMIC DNA]</scope>
    <source>
        <strain>1106a</strain>
    </source>
</reference>
<protein>
    <recommendedName>
        <fullName evidence="1">Large ribosomal subunit protein bL36</fullName>
    </recommendedName>
    <alternativeName>
        <fullName evidence="2">50S ribosomal protein L36</fullName>
    </alternativeName>
</protein>
<proteinExistence type="inferred from homology"/>
<sequence length="38" mass="4410">MKVMASVKRICRNCKIIKRKGVVRVICSSDPRHKQRQG</sequence>